<proteinExistence type="inferred from homology"/>
<protein>
    <recommendedName>
        <fullName evidence="1">Ribosomal RNA small subunit methyltransferase G</fullName>
        <ecNumber evidence="1">2.1.1.170</ecNumber>
    </recommendedName>
    <alternativeName>
        <fullName evidence="1">16S rRNA 7-methylguanosine methyltransferase</fullName>
        <shortName evidence="1">16S rRNA m7G methyltransferase</shortName>
    </alternativeName>
</protein>
<name>RSMG_CAMJE</name>
<dbReference type="EC" id="2.1.1.170" evidence="1"/>
<dbReference type="EMBL" id="AL111168">
    <property type="protein sequence ID" value="CAL35115.1"/>
    <property type="molecule type" value="Genomic_DNA"/>
</dbReference>
<dbReference type="PIR" id="B81375">
    <property type="entry name" value="B81375"/>
</dbReference>
<dbReference type="RefSeq" id="WP_002853035.1">
    <property type="nucleotide sequence ID" value="NZ_SZUC01000001.1"/>
</dbReference>
<dbReference type="RefSeq" id="YP_002344392.1">
    <property type="nucleotide sequence ID" value="NC_002163.1"/>
</dbReference>
<dbReference type="SMR" id="Q9PNU3"/>
<dbReference type="IntAct" id="Q9PNU3">
    <property type="interactions" value="7"/>
</dbReference>
<dbReference type="STRING" id="192222.Cj0997"/>
<dbReference type="PaxDb" id="192222-Cj0997"/>
<dbReference type="EnsemblBacteria" id="CAL35115">
    <property type="protein sequence ID" value="CAL35115"/>
    <property type="gene ID" value="Cj0997"/>
</dbReference>
<dbReference type="GeneID" id="905288"/>
<dbReference type="KEGG" id="cje:Cj0997"/>
<dbReference type="PATRIC" id="fig|192222.6.peg.979"/>
<dbReference type="eggNOG" id="COG0357">
    <property type="taxonomic scope" value="Bacteria"/>
</dbReference>
<dbReference type="HOGENOM" id="CLU_065341_2_1_7"/>
<dbReference type="OrthoDB" id="9808773at2"/>
<dbReference type="Proteomes" id="UP000000799">
    <property type="component" value="Chromosome"/>
</dbReference>
<dbReference type="GO" id="GO:0005829">
    <property type="term" value="C:cytosol"/>
    <property type="evidence" value="ECO:0007669"/>
    <property type="project" value="TreeGrafter"/>
</dbReference>
<dbReference type="GO" id="GO:0070043">
    <property type="term" value="F:rRNA (guanine-N7-)-methyltransferase activity"/>
    <property type="evidence" value="ECO:0007669"/>
    <property type="project" value="UniProtKB-UniRule"/>
</dbReference>
<dbReference type="Gene3D" id="3.40.50.150">
    <property type="entry name" value="Vaccinia Virus protein VP39"/>
    <property type="match status" value="1"/>
</dbReference>
<dbReference type="HAMAP" id="MF_00074">
    <property type="entry name" value="16SrRNA_methyltr_G"/>
    <property type="match status" value="1"/>
</dbReference>
<dbReference type="InterPro" id="IPR003682">
    <property type="entry name" value="rRNA_ssu_MeTfrase_G"/>
</dbReference>
<dbReference type="InterPro" id="IPR029063">
    <property type="entry name" value="SAM-dependent_MTases_sf"/>
</dbReference>
<dbReference type="NCBIfam" id="TIGR00138">
    <property type="entry name" value="rsmG_gidB"/>
    <property type="match status" value="1"/>
</dbReference>
<dbReference type="PANTHER" id="PTHR31760">
    <property type="entry name" value="S-ADENOSYL-L-METHIONINE-DEPENDENT METHYLTRANSFERASES SUPERFAMILY PROTEIN"/>
    <property type="match status" value="1"/>
</dbReference>
<dbReference type="PANTHER" id="PTHR31760:SF0">
    <property type="entry name" value="S-ADENOSYL-L-METHIONINE-DEPENDENT METHYLTRANSFERASES SUPERFAMILY PROTEIN"/>
    <property type="match status" value="1"/>
</dbReference>
<dbReference type="Pfam" id="PF02527">
    <property type="entry name" value="GidB"/>
    <property type="match status" value="1"/>
</dbReference>
<dbReference type="PIRSF" id="PIRSF003078">
    <property type="entry name" value="GidB"/>
    <property type="match status" value="1"/>
</dbReference>
<dbReference type="SUPFAM" id="SSF53335">
    <property type="entry name" value="S-adenosyl-L-methionine-dependent methyltransferases"/>
    <property type="match status" value="1"/>
</dbReference>
<organism>
    <name type="scientific">Campylobacter jejuni subsp. jejuni serotype O:2 (strain ATCC 700819 / NCTC 11168)</name>
    <dbReference type="NCBI Taxonomy" id="192222"/>
    <lineage>
        <taxon>Bacteria</taxon>
        <taxon>Pseudomonadati</taxon>
        <taxon>Campylobacterota</taxon>
        <taxon>Epsilonproteobacteria</taxon>
        <taxon>Campylobacterales</taxon>
        <taxon>Campylobacteraceae</taxon>
        <taxon>Campylobacter</taxon>
    </lineage>
</organism>
<evidence type="ECO:0000255" key="1">
    <source>
        <dbReference type="HAMAP-Rule" id="MF_00074"/>
    </source>
</evidence>
<keyword id="KW-0963">Cytoplasm</keyword>
<keyword id="KW-0489">Methyltransferase</keyword>
<keyword id="KW-1185">Reference proteome</keyword>
<keyword id="KW-0698">rRNA processing</keyword>
<keyword id="KW-0949">S-adenosyl-L-methionine</keyword>
<keyword id="KW-0808">Transferase</keyword>
<gene>
    <name evidence="1" type="primary">rsmG</name>
    <name type="ordered locus">Cj0997</name>
</gene>
<feature type="chain" id="PRO_0000184231" description="Ribosomal RNA small subunit methyltransferase G">
    <location>
        <begin position="1"/>
        <end position="188"/>
    </location>
</feature>
<feature type="binding site" evidence="1">
    <location>
        <position position="69"/>
    </location>
    <ligand>
        <name>S-adenosyl-L-methionine</name>
        <dbReference type="ChEBI" id="CHEBI:59789"/>
    </ligand>
</feature>
<feature type="binding site" evidence="1">
    <location>
        <position position="74"/>
    </location>
    <ligand>
        <name>S-adenosyl-L-methionine</name>
        <dbReference type="ChEBI" id="CHEBI:59789"/>
    </ligand>
</feature>
<feature type="binding site" evidence="1">
    <location>
        <begin position="119"/>
        <end position="120"/>
    </location>
    <ligand>
        <name>S-adenosyl-L-methionine</name>
        <dbReference type="ChEBI" id="CHEBI:59789"/>
    </ligand>
</feature>
<feature type="binding site" evidence="1">
    <location>
        <position position="134"/>
    </location>
    <ligand>
        <name>S-adenosyl-L-methionine</name>
        <dbReference type="ChEBI" id="CHEBI:59789"/>
    </ligand>
</feature>
<reference key="1">
    <citation type="journal article" date="2000" name="Nature">
        <title>The genome sequence of the food-borne pathogen Campylobacter jejuni reveals hypervariable sequences.</title>
        <authorList>
            <person name="Parkhill J."/>
            <person name="Wren B.W."/>
            <person name="Mungall K.L."/>
            <person name="Ketley J.M."/>
            <person name="Churcher C.M."/>
            <person name="Basham D."/>
            <person name="Chillingworth T."/>
            <person name="Davies R.M."/>
            <person name="Feltwell T."/>
            <person name="Holroyd S."/>
            <person name="Jagels K."/>
            <person name="Karlyshev A.V."/>
            <person name="Moule S."/>
            <person name="Pallen M.J."/>
            <person name="Penn C.W."/>
            <person name="Quail M.A."/>
            <person name="Rajandream M.A."/>
            <person name="Rutherford K.M."/>
            <person name="van Vliet A.H.M."/>
            <person name="Whitehead S."/>
            <person name="Barrell B.G."/>
        </authorList>
    </citation>
    <scope>NUCLEOTIDE SEQUENCE [LARGE SCALE GENOMIC DNA]</scope>
    <source>
        <strain>ATCC 700819 / NCTC 11168</strain>
    </source>
</reference>
<sequence>MIFKDYDFLQNYDLKNFEEKVKIYKELLSKFNRIHNLTHLKNIDENIFDSIKILDFYDFSKAKNIADIGSGAGFPVVFLAFLLQSNFHLFEPNPKKAAFLRTLKIECELPNLHIYKEKVQEYKNTFKADIITSRALMDVKPLLEICKNLKDENTVFILWKGSEIYQELENIKDYEIFENNLRRYCILK</sequence>
<accession>Q9PNU3</accession>
<accession>Q0P9Q5</accession>
<comment type="function">
    <text evidence="1">Specifically methylates the N7 position of guanine in position 527 of 16S rRNA.</text>
</comment>
<comment type="catalytic activity">
    <reaction evidence="1">
        <text>guanosine(527) in 16S rRNA + S-adenosyl-L-methionine = N(7)-methylguanosine(527) in 16S rRNA + S-adenosyl-L-homocysteine</text>
        <dbReference type="Rhea" id="RHEA:42732"/>
        <dbReference type="Rhea" id="RHEA-COMP:10209"/>
        <dbReference type="Rhea" id="RHEA-COMP:10210"/>
        <dbReference type="ChEBI" id="CHEBI:57856"/>
        <dbReference type="ChEBI" id="CHEBI:59789"/>
        <dbReference type="ChEBI" id="CHEBI:74269"/>
        <dbReference type="ChEBI" id="CHEBI:74480"/>
        <dbReference type="EC" id="2.1.1.170"/>
    </reaction>
</comment>
<comment type="subcellular location">
    <subcellularLocation>
        <location evidence="1">Cytoplasm</location>
    </subcellularLocation>
</comment>
<comment type="similarity">
    <text evidence="1">Belongs to the methyltransferase superfamily. RNA methyltransferase RsmG family.</text>
</comment>